<proteinExistence type="inferred from homology"/>
<feature type="chain" id="PRO_0000129657" description="Large ribosomal subunit protein uL2">
    <location>
        <begin position="1"/>
        <end position="274"/>
    </location>
</feature>
<feature type="region of interest" description="Disordered" evidence="2">
    <location>
        <begin position="221"/>
        <end position="274"/>
    </location>
</feature>
<organism>
    <name type="scientific">Yersinia enterocolitica</name>
    <dbReference type="NCBI Taxonomy" id="630"/>
    <lineage>
        <taxon>Bacteria</taxon>
        <taxon>Pseudomonadati</taxon>
        <taxon>Pseudomonadota</taxon>
        <taxon>Gammaproteobacteria</taxon>
        <taxon>Enterobacterales</taxon>
        <taxon>Yersiniaceae</taxon>
        <taxon>Yersinia</taxon>
    </lineage>
</organism>
<comment type="function">
    <text evidence="1">One of the primary rRNA binding proteins. Required for association of the 30S and 50S subunits to form the 70S ribosome, for tRNA binding and peptide bond formation. It has been suggested to have peptidyltransferase activity; this is somewhat controversial. Makes several contacts with the 16S rRNA in the 70S ribosome.</text>
</comment>
<comment type="subunit">
    <text evidence="1">Part of the 50S ribosomal subunit. Forms a bridge to the 30S subunit in the 70S ribosome.</text>
</comment>
<comment type="similarity">
    <text evidence="1">Belongs to the universal ribosomal protein uL2 family.</text>
</comment>
<sequence length="274" mass="30058">MAIVKCKPTSPGRRHVVKVVNPELHKGKPYAPLLEKLSKSGGRNNNGRITTRHIGGGHKQHYRLVDFKRNKDGIPAVVERLEYDPNRSANIALVLYKDGERRYILAPKGLKAGDQIQSGVDAAIKAGNTLPMRNIPVGSTVHNVEMKPGKGGQLARSAGAYVQIVARDGSYVTLRLRSGEMRKVLADCRATLGEVGNAEHMLRVLGKAGASRWRGIRPTVRGTAMNPVDHPHGGGEGRNFGKHPVTPWGVQTKGKKTRSNKRTDKFIVRRRSKK</sequence>
<gene>
    <name evidence="1" type="primary">rplB</name>
</gene>
<accession>P49239</accession>
<protein>
    <recommendedName>
        <fullName evidence="1">Large ribosomal subunit protein uL2</fullName>
    </recommendedName>
    <alternativeName>
        <fullName evidence="3">50S ribosomal protein L2</fullName>
    </alternativeName>
</protein>
<keyword id="KW-0687">Ribonucleoprotein</keyword>
<keyword id="KW-0689">Ribosomal protein</keyword>
<keyword id="KW-0694">RNA-binding</keyword>
<keyword id="KW-0699">rRNA-binding</keyword>
<name>RL2_YEREN</name>
<evidence type="ECO:0000255" key="1">
    <source>
        <dbReference type="HAMAP-Rule" id="MF_01320"/>
    </source>
</evidence>
<evidence type="ECO:0000256" key="2">
    <source>
        <dbReference type="SAM" id="MobiDB-lite"/>
    </source>
</evidence>
<evidence type="ECO:0000305" key="3"/>
<reference key="1">
    <citation type="submission" date="1994-06" db="EMBL/GenBank/DDBJ databases">
        <authorList>
            <person name="Skurnik M."/>
        </authorList>
    </citation>
    <scope>NUCLEOTIDE SEQUENCE [GENOMIC DNA]</scope>
    <source>
        <strain>6471/76 / Serotype O:3</strain>
    </source>
</reference>
<dbReference type="EMBL" id="U11251">
    <property type="protein sequence ID" value="AAC43513.1"/>
    <property type="molecule type" value="Genomic_DNA"/>
</dbReference>
<dbReference type="RefSeq" id="WP_004709246.1">
    <property type="nucleotide sequence ID" value="NZ_WJHZ01000054.1"/>
</dbReference>
<dbReference type="SMR" id="P49239"/>
<dbReference type="STRING" id="1443113.LC20_00339"/>
<dbReference type="GeneID" id="93971444"/>
<dbReference type="eggNOG" id="COG0090">
    <property type="taxonomic scope" value="Bacteria"/>
</dbReference>
<dbReference type="OMA" id="GGRHPCT"/>
<dbReference type="GO" id="GO:0015934">
    <property type="term" value="C:large ribosomal subunit"/>
    <property type="evidence" value="ECO:0007669"/>
    <property type="project" value="InterPro"/>
</dbReference>
<dbReference type="GO" id="GO:0019843">
    <property type="term" value="F:rRNA binding"/>
    <property type="evidence" value="ECO:0007669"/>
    <property type="project" value="UniProtKB-UniRule"/>
</dbReference>
<dbReference type="GO" id="GO:0003735">
    <property type="term" value="F:structural constituent of ribosome"/>
    <property type="evidence" value="ECO:0007669"/>
    <property type="project" value="InterPro"/>
</dbReference>
<dbReference type="GO" id="GO:0016740">
    <property type="term" value="F:transferase activity"/>
    <property type="evidence" value="ECO:0007669"/>
    <property type="project" value="InterPro"/>
</dbReference>
<dbReference type="GO" id="GO:0002181">
    <property type="term" value="P:cytoplasmic translation"/>
    <property type="evidence" value="ECO:0007669"/>
    <property type="project" value="TreeGrafter"/>
</dbReference>
<dbReference type="FunFam" id="2.30.30.30:FF:000001">
    <property type="entry name" value="50S ribosomal protein L2"/>
    <property type="match status" value="1"/>
</dbReference>
<dbReference type="FunFam" id="2.40.50.140:FF:000003">
    <property type="entry name" value="50S ribosomal protein L2"/>
    <property type="match status" value="1"/>
</dbReference>
<dbReference type="FunFam" id="4.10.950.10:FF:000001">
    <property type="entry name" value="50S ribosomal protein L2"/>
    <property type="match status" value="1"/>
</dbReference>
<dbReference type="Gene3D" id="2.30.30.30">
    <property type="match status" value="1"/>
</dbReference>
<dbReference type="Gene3D" id="2.40.50.140">
    <property type="entry name" value="Nucleic acid-binding proteins"/>
    <property type="match status" value="1"/>
</dbReference>
<dbReference type="Gene3D" id="4.10.950.10">
    <property type="entry name" value="Ribosomal protein L2, domain 3"/>
    <property type="match status" value="1"/>
</dbReference>
<dbReference type="HAMAP" id="MF_01320_B">
    <property type="entry name" value="Ribosomal_uL2_B"/>
    <property type="match status" value="1"/>
</dbReference>
<dbReference type="InterPro" id="IPR012340">
    <property type="entry name" value="NA-bd_OB-fold"/>
</dbReference>
<dbReference type="InterPro" id="IPR014722">
    <property type="entry name" value="Rib_uL2_dom2"/>
</dbReference>
<dbReference type="InterPro" id="IPR002171">
    <property type="entry name" value="Ribosomal_uL2"/>
</dbReference>
<dbReference type="InterPro" id="IPR005880">
    <property type="entry name" value="Ribosomal_uL2_bac/org-type"/>
</dbReference>
<dbReference type="InterPro" id="IPR022669">
    <property type="entry name" value="Ribosomal_uL2_C"/>
</dbReference>
<dbReference type="InterPro" id="IPR022671">
    <property type="entry name" value="Ribosomal_uL2_CS"/>
</dbReference>
<dbReference type="InterPro" id="IPR014726">
    <property type="entry name" value="Ribosomal_uL2_dom3"/>
</dbReference>
<dbReference type="InterPro" id="IPR022666">
    <property type="entry name" value="Ribosomal_uL2_RNA-bd_dom"/>
</dbReference>
<dbReference type="InterPro" id="IPR008991">
    <property type="entry name" value="Translation_prot_SH3-like_sf"/>
</dbReference>
<dbReference type="NCBIfam" id="TIGR01171">
    <property type="entry name" value="rplB_bact"/>
    <property type="match status" value="1"/>
</dbReference>
<dbReference type="PANTHER" id="PTHR13691:SF5">
    <property type="entry name" value="LARGE RIBOSOMAL SUBUNIT PROTEIN UL2M"/>
    <property type="match status" value="1"/>
</dbReference>
<dbReference type="PANTHER" id="PTHR13691">
    <property type="entry name" value="RIBOSOMAL PROTEIN L2"/>
    <property type="match status" value="1"/>
</dbReference>
<dbReference type="Pfam" id="PF00181">
    <property type="entry name" value="Ribosomal_L2"/>
    <property type="match status" value="1"/>
</dbReference>
<dbReference type="Pfam" id="PF03947">
    <property type="entry name" value="Ribosomal_L2_C"/>
    <property type="match status" value="1"/>
</dbReference>
<dbReference type="PIRSF" id="PIRSF002158">
    <property type="entry name" value="Ribosomal_L2"/>
    <property type="match status" value="1"/>
</dbReference>
<dbReference type="SMART" id="SM01383">
    <property type="entry name" value="Ribosomal_L2"/>
    <property type="match status" value="1"/>
</dbReference>
<dbReference type="SMART" id="SM01382">
    <property type="entry name" value="Ribosomal_L2_C"/>
    <property type="match status" value="1"/>
</dbReference>
<dbReference type="SUPFAM" id="SSF50249">
    <property type="entry name" value="Nucleic acid-binding proteins"/>
    <property type="match status" value="1"/>
</dbReference>
<dbReference type="SUPFAM" id="SSF50104">
    <property type="entry name" value="Translation proteins SH3-like domain"/>
    <property type="match status" value="1"/>
</dbReference>
<dbReference type="PROSITE" id="PS00467">
    <property type="entry name" value="RIBOSOMAL_L2"/>
    <property type="match status" value="1"/>
</dbReference>